<organism>
    <name type="scientific">Clostridium botulinum (strain Okra / Type B1)</name>
    <dbReference type="NCBI Taxonomy" id="498213"/>
    <lineage>
        <taxon>Bacteria</taxon>
        <taxon>Bacillati</taxon>
        <taxon>Bacillota</taxon>
        <taxon>Clostridia</taxon>
        <taxon>Eubacteriales</taxon>
        <taxon>Clostridiaceae</taxon>
        <taxon>Clostridium</taxon>
    </lineage>
</organism>
<protein>
    <recommendedName>
        <fullName evidence="1">Aspartyl/glutamyl-tRNA(Asn/Gln) amidotransferase subunit C</fullName>
        <shortName evidence="1">Asp/Glu-ADT subunit C</shortName>
        <ecNumber evidence="1">6.3.5.-</ecNumber>
    </recommendedName>
</protein>
<name>GATC_CLOBK</name>
<comment type="function">
    <text evidence="1">Allows the formation of correctly charged Asn-tRNA(Asn) or Gln-tRNA(Gln) through the transamidation of misacylated Asp-tRNA(Asn) or Glu-tRNA(Gln) in organisms which lack either or both of asparaginyl-tRNA or glutaminyl-tRNA synthetases. The reaction takes place in the presence of glutamine and ATP through an activated phospho-Asp-tRNA(Asn) or phospho-Glu-tRNA(Gln).</text>
</comment>
<comment type="catalytic activity">
    <reaction evidence="1">
        <text>L-glutamyl-tRNA(Gln) + L-glutamine + ATP + H2O = L-glutaminyl-tRNA(Gln) + L-glutamate + ADP + phosphate + H(+)</text>
        <dbReference type="Rhea" id="RHEA:17521"/>
        <dbReference type="Rhea" id="RHEA-COMP:9681"/>
        <dbReference type="Rhea" id="RHEA-COMP:9684"/>
        <dbReference type="ChEBI" id="CHEBI:15377"/>
        <dbReference type="ChEBI" id="CHEBI:15378"/>
        <dbReference type="ChEBI" id="CHEBI:29985"/>
        <dbReference type="ChEBI" id="CHEBI:30616"/>
        <dbReference type="ChEBI" id="CHEBI:43474"/>
        <dbReference type="ChEBI" id="CHEBI:58359"/>
        <dbReference type="ChEBI" id="CHEBI:78520"/>
        <dbReference type="ChEBI" id="CHEBI:78521"/>
        <dbReference type="ChEBI" id="CHEBI:456216"/>
    </reaction>
</comment>
<comment type="catalytic activity">
    <reaction evidence="1">
        <text>L-aspartyl-tRNA(Asn) + L-glutamine + ATP + H2O = L-asparaginyl-tRNA(Asn) + L-glutamate + ADP + phosphate + 2 H(+)</text>
        <dbReference type="Rhea" id="RHEA:14513"/>
        <dbReference type="Rhea" id="RHEA-COMP:9674"/>
        <dbReference type="Rhea" id="RHEA-COMP:9677"/>
        <dbReference type="ChEBI" id="CHEBI:15377"/>
        <dbReference type="ChEBI" id="CHEBI:15378"/>
        <dbReference type="ChEBI" id="CHEBI:29985"/>
        <dbReference type="ChEBI" id="CHEBI:30616"/>
        <dbReference type="ChEBI" id="CHEBI:43474"/>
        <dbReference type="ChEBI" id="CHEBI:58359"/>
        <dbReference type="ChEBI" id="CHEBI:78515"/>
        <dbReference type="ChEBI" id="CHEBI:78516"/>
        <dbReference type="ChEBI" id="CHEBI:456216"/>
    </reaction>
</comment>
<comment type="subunit">
    <text evidence="1">Heterotrimer of A, B and C subunits.</text>
</comment>
<comment type="similarity">
    <text evidence="1">Belongs to the GatC family.</text>
</comment>
<gene>
    <name evidence="1" type="primary">gatC</name>
    <name type="ordered locus">CLD_1255</name>
</gene>
<proteinExistence type="inferred from homology"/>
<feature type="chain" id="PRO_1000095277" description="Aspartyl/glutamyl-tRNA(Asn/Gln) amidotransferase subunit C">
    <location>
        <begin position="1"/>
        <end position="95"/>
    </location>
</feature>
<dbReference type="EC" id="6.3.5.-" evidence="1"/>
<dbReference type="EMBL" id="CP000939">
    <property type="protein sequence ID" value="ACA45425.1"/>
    <property type="molecule type" value="Genomic_DNA"/>
</dbReference>
<dbReference type="RefSeq" id="WP_003357679.1">
    <property type="nucleotide sequence ID" value="NC_010516.1"/>
</dbReference>
<dbReference type="SMR" id="B1INF8"/>
<dbReference type="GeneID" id="92940009"/>
<dbReference type="KEGG" id="cbb:CLD_1255"/>
<dbReference type="HOGENOM" id="CLU_105899_2_1_9"/>
<dbReference type="Proteomes" id="UP000008541">
    <property type="component" value="Chromosome"/>
</dbReference>
<dbReference type="GO" id="GO:0050566">
    <property type="term" value="F:asparaginyl-tRNA synthase (glutamine-hydrolyzing) activity"/>
    <property type="evidence" value="ECO:0007669"/>
    <property type="project" value="RHEA"/>
</dbReference>
<dbReference type="GO" id="GO:0005524">
    <property type="term" value="F:ATP binding"/>
    <property type="evidence" value="ECO:0007669"/>
    <property type="project" value="UniProtKB-KW"/>
</dbReference>
<dbReference type="GO" id="GO:0050567">
    <property type="term" value="F:glutaminyl-tRNA synthase (glutamine-hydrolyzing) activity"/>
    <property type="evidence" value="ECO:0007669"/>
    <property type="project" value="UniProtKB-UniRule"/>
</dbReference>
<dbReference type="GO" id="GO:0070681">
    <property type="term" value="P:glutaminyl-tRNAGln biosynthesis via transamidation"/>
    <property type="evidence" value="ECO:0007669"/>
    <property type="project" value="TreeGrafter"/>
</dbReference>
<dbReference type="GO" id="GO:0006450">
    <property type="term" value="P:regulation of translational fidelity"/>
    <property type="evidence" value="ECO:0007669"/>
    <property type="project" value="InterPro"/>
</dbReference>
<dbReference type="GO" id="GO:0006412">
    <property type="term" value="P:translation"/>
    <property type="evidence" value="ECO:0007669"/>
    <property type="project" value="UniProtKB-UniRule"/>
</dbReference>
<dbReference type="Gene3D" id="1.10.20.60">
    <property type="entry name" value="Glu-tRNAGln amidotransferase C subunit, N-terminal domain"/>
    <property type="match status" value="1"/>
</dbReference>
<dbReference type="HAMAP" id="MF_00122">
    <property type="entry name" value="GatC"/>
    <property type="match status" value="1"/>
</dbReference>
<dbReference type="InterPro" id="IPR036113">
    <property type="entry name" value="Asp/Glu-ADT_sf_sub_c"/>
</dbReference>
<dbReference type="InterPro" id="IPR003837">
    <property type="entry name" value="GatC"/>
</dbReference>
<dbReference type="NCBIfam" id="TIGR00135">
    <property type="entry name" value="gatC"/>
    <property type="match status" value="1"/>
</dbReference>
<dbReference type="PANTHER" id="PTHR15004">
    <property type="entry name" value="GLUTAMYL-TRNA(GLN) AMIDOTRANSFERASE SUBUNIT C, MITOCHONDRIAL"/>
    <property type="match status" value="1"/>
</dbReference>
<dbReference type="PANTHER" id="PTHR15004:SF0">
    <property type="entry name" value="GLUTAMYL-TRNA(GLN) AMIDOTRANSFERASE SUBUNIT C, MITOCHONDRIAL"/>
    <property type="match status" value="1"/>
</dbReference>
<dbReference type="Pfam" id="PF02686">
    <property type="entry name" value="GatC"/>
    <property type="match status" value="1"/>
</dbReference>
<dbReference type="SUPFAM" id="SSF141000">
    <property type="entry name" value="Glu-tRNAGln amidotransferase C subunit"/>
    <property type="match status" value="1"/>
</dbReference>
<accession>B1INF8</accession>
<evidence type="ECO:0000255" key="1">
    <source>
        <dbReference type="HAMAP-Rule" id="MF_00122"/>
    </source>
</evidence>
<sequence>MSVSKKDVEYVAELARLEFKEEEKDNFVNDLNKILNYMEKLDELNTDDVDIVVNPYYIENKYREDNVEKSMELKEVIDNAPESLEEYVIVPKVID</sequence>
<keyword id="KW-0067">ATP-binding</keyword>
<keyword id="KW-0436">Ligase</keyword>
<keyword id="KW-0547">Nucleotide-binding</keyword>
<keyword id="KW-0648">Protein biosynthesis</keyword>
<reference key="1">
    <citation type="journal article" date="2007" name="PLoS ONE">
        <title>Analysis of the neurotoxin complex genes in Clostridium botulinum A1-A4 and B1 strains: BoNT/A3, /Ba4 and /B1 clusters are located within plasmids.</title>
        <authorList>
            <person name="Smith T.J."/>
            <person name="Hill K.K."/>
            <person name="Foley B.T."/>
            <person name="Detter J.C."/>
            <person name="Munk A.C."/>
            <person name="Bruce D.C."/>
            <person name="Doggett N.A."/>
            <person name="Smith L.A."/>
            <person name="Marks J.D."/>
            <person name="Xie G."/>
            <person name="Brettin T.S."/>
        </authorList>
    </citation>
    <scope>NUCLEOTIDE SEQUENCE [LARGE SCALE GENOMIC DNA]</scope>
    <source>
        <strain>Okra / Type B1</strain>
    </source>
</reference>